<evidence type="ECO:0000255" key="1">
    <source>
        <dbReference type="HAMAP-Rule" id="MF_01381"/>
    </source>
</evidence>
<gene>
    <name evidence="1" type="primary">emtA</name>
    <name type="synonym">mltE</name>
    <name type="ordered locus">SPA1074</name>
</gene>
<protein>
    <recommendedName>
        <fullName evidence="1">Endo-type membrane-bound lytic murein transglycosylase A</fullName>
        <ecNumber evidence="1">4.2.2.n2</ecNumber>
    </recommendedName>
    <alternativeName>
        <fullName evidence="1">Peptidoglycan lytic endotransglycosylase</fullName>
    </alternativeName>
</protein>
<comment type="function">
    <text evidence="1">Murein-degrading enzyme. May play a role in recycling of muropeptides during cell elongation and/or cell division. Preferentially cleaves at a distance of more than two disaccharide units from the ends of the glycan chain.</text>
</comment>
<comment type="catalytic activity">
    <reaction evidence="1">
        <text>Endolytic cleavage of the (1-&gt;4)-beta-glycosidic linkage between N-acetylmuramic acid (MurNAc) and N-acetylglucosamine (GlcNAc) residues in peptidoglycan with concomitant formation of a 1,6-anhydrobond in the MurNAc residue.</text>
        <dbReference type="EC" id="4.2.2.n2"/>
    </reaction>
</comment>
<comment type="subcellular location">
    <subcellularLocation>
        <location evidence="1">Cell outer membrane</location>
        <topology evidence="1">Lipid-anchor</topology>
    </subcellularLocation>
</comment>
<comment type="similarity">
    <text evidence="1">Belongs to the transglycosylase Slt family.</text>
</comment>
<reference key="1">
    <citation type="journal article" date="2004" name="Nat. Genet.">
        <title>Comparison of genome degradation in Paratyphi A and Typhi, human-restricted serovars of Salmonella enterica that cause typhoid.</title>
        <authorList>
            <person name="McClelland M."/>
            <person name="Sanderson K.E."/>
            <person name="Clifton S.W."/>
            <person name="Latreille P."/>
            <person name="Porwollik S."/>
            <person name="Sabo A."/>
            <person name="Meyer R."/>
            <person name="Bieri T."/>
            <person name="Ozersky P."/>
            <person name="McLellan M."/>
            <person name="Harkins C.R."/>
            <person name="Wang C."/>
            <person name="Nguyen C."/>
            <person name="Berghoff A."/>
            <person name="Elliott G."/>
            <person name="Kohlberg S."/>
            <person name="Strong C."/>
            <person name="Du F."/>
            <person name="Carter J."/>
            <person name="Kremizki C."/>
            <person name="Layman D."/>
            <person name="Leonard S."/>
            <person name="Sun H."/>
            <person name="Fulton L."/>
            <person name="Nash W."/>
            <person name="Miner T."/>
            <person name="Minx P."/>
            <person name="Delehaunty K."/>
            <person name="Fronick C."/>
            <person name="Magrini V."/>
            <person name="Nhan M."/>
            <person name="Warren W."/>
            <person name="Florea L."/>
            <person name="Spieth J."/>
            <person name="Wilson R.K."/>
        </authorList>
    </citation>
    <scope>NUCLEOTIDE SEQUENCE [LARGE SCALE GENOMIC DNA]</scope>
    <source>
        <strain>ATCC 9150 / SARB42</strain>
    </source>
</reference>
<proteinExistence type="inferred from homology"/>
<sequence length="203" mass="22427">MKLRWFAFLVVILAGCSSKQDYRNPPWNAEVPVKRAMQWMPISEKAGAAWGVDPHLITAIIAIESGGNPNAVSKSNAIGLMQLKASTSGRDVYRRMGWRGEPTTSELKNPERNISMGAAYLSILENGPLAGIKDPQVMQYALVVSYANGAGALLRTFSSDRKKAIEKINDLDADEFFEHVVDNHPAPQAPRYIWKLQQALDAM</sequence>
<name>EMTA_SALPA</name>
<accession>Q5PN08</accession>
<dbReference type="EC" id="4.2.2.n2" evidence="1"/>
<dbReference type="EMBL" id="CP000026">
    <property type="protein sequence ID" value="AAV77045.1"/>
    <property type="molecule type" value="Genomic_DNA"/>
</dbReference>
<dbReference type="RefSeq" id="WP_000776974.1">
    <property type="nucleotide sequence ID" value="NC_006511.1"/>
</dbReference>
<dbReference type="SMR" id="Q5PN08"/>
<dbReference type="CAZy" id="GH23">
    <property type="family name" value="Glycoside Hydrolase Family 23"/>
</dbReference>
<dbReference type="KEGG" id="spt:SPA1074"/>
<dbReference type="HOGENOM" id="CLU_103257_0_0_6"/>
<dbReference type="Proteomes" id="UP000008185">
    <property type="component" value="Chromosome"/>
</dbReference>
<dbReference type="GO" id="GO:0009279">
    <property type="term" value="C:cell outer membrane"/>
    <property type="evidence" value="ECO:0007669"/>
    <property type="project" value="UniProtKB-SubCell"/>
</dbReference>
<dbReference type="GO" id="GO:0008932">
    <property type="term" value="F:lytic endotransglycosylase activity"/>
    <property type="evidence" value="ECO:0007669"/>
    <property type="project" value="InterPro"/>
</dbReference>
<dbReference type="GO" id="GO:0016998">
    <property type="term" value="P:cell wall macromolecule catabolic process"/>
    <property type="evidence" value="ECO:0007669"/>
    <property type="project" value="UniProtKB-UniRule"/>
</dbReference>
<dbReference type="GO" id="GO:0071555">
    <property type="term" value="P:cell wall organization"/>
    <property type="evidence" value="ECO:0007669"/>
    <property type="project" value="UniProtKB-KW"/>
</dbReference>
<dbReference type="GO" id="GO:0000270">
    <property type="term" value="P:peptidoglycan metabolic process"/>
    <property type="evidence" value="ECO:0007669"/>
    <property type="project" value="InterPro"/>
</dbReference>
<dbReference type="CDD" id="cd16893">
    <property type="entry name" value="LT_MltC_MltE"/>
    <property type="match status" value="1"/>
</dbReference>
<dbReference type="Gene3D" id="1.10.530.10">
    <property type="match status" value="1"/>
</dbReference>
<dbReference type="HAMAP" id="MF_01381">
    <property type="entry name" value="EmtA"/>
    <property type="match status" value="1"/>
</dbReference>
<dbReference type="InterPro" id="IPR023946">
    <property type="entry name" value="EmtA"/>
</dbReference>
<dbReference type="InterPro" id="IPR023346">
    <property type="entry name" value="Lysozyme-like_dom_sf"/>
</dbReference>
<dbReference type="InterPro" id="IPR000189">
    <property type="entry name" value="Transglyc_AS"/>
</dbReference>
<dbReference type="InterPro" id="IPR008258">
    <property type="entry name" value="Transglycosylase_SLT_dom_1"/>
</dbReference>
<dbReference type="NCBIfam" id="NF012014">
    <property type="entry name" value="PRK15470.1"/>
    <property type="match status" value="1"/>
</dbReference>
<dbReference type="PANTHER" id="PTHR37423:SF4">
    <property type="entry name" value="ENDO-TYPE MEMBRANE-BOUND LYTIC MUREIN TRANSGLYCOSYLASE A"/>
    <property type="match status" value="1"/>
</dbReference>
<dbReference type="PANTHER" id="PTHR37423">
    <property type="entry name" value="SOLUBLE LYTIC MUREIN TRANSGLYCOSYLASE-RELATED"/>
    <property type="match status" value="1"/>
</dbReference>
<dbReference type="Pfam" id="PF01464">
    <property type="entry name" value="SLT"/>
    <property type="match status" value="1"/>
</dbReference>
<dbReference type="SUPFAM" id="SSF53955">
    <property type="entry name" value="Lysozyme-like"/>
    <property type="match status" value="1"/>
</dbReference>
<dbReference type="PROSITE" id="PS51257">
    <property type="entry name" value="PROKAR_LIPOPROTEIN"/>
    <property type="match status" value="1"/>
</dbReference>
<dbReference type="PROSITE" id="PS00922">
    <property type="entry name" value="TRANSGLYCOSYLASE"/>
    <property type="match status" value="1"/>
</dbReference>
<keyword id="KW-0998">Cell outer membrane</keyword>
<keyword id="KW-0961">Cell wall biogenesis/degradation</keyword>
<keyword id="KW-0449">Lipoprotein</keyword>
<keyword id="KW-0456">Lyase</keyword>
<keyword id="KW-0472">Membrane</keyword>
<keyword id="KW-0564">Palmitate</keyword>
<keyword id="KW-0732">Signal</keyword>
<feature type="signal peptide" evidence="1">
    <location>
        <begin position="1"/>
        <end position="15"/>
    </location>
</feature>
<feature type="chain" id="PRO_0000312911" description="Endo-type membrane-bound lytic murein transglycosylase A">
    <location>
        <begin position="16"/>
        <end position="203"/>
    </location>
</feature>
<feature type="lipid moiety-binding region" description="N-palmitoyl cysteine" evidence="1">
    <location>
        <position position="16"/>
    </location>
</feature>
<feature type="lipid moiety-binding region" description="S-diacylglycerol cysteine" evidence="1">
    <location>
        <position position="16"/>
    </location>
</feature>
<organism>
    <name type="scientific">Salmonella paratyphi A (strain ATCC 9150 / SARB42)</name>
    <dbReference type="NCBI Taxonomy" id="295319"/>
    <lineage>
        <taxon>Bacteria</taxon>
        <taxon>Pseudomonadati</taxon>
        <taxon>Pseudomonadota</taxon>
        <taxon>Gammaproteobacteria</taxon>
        <taxon>Enterobacterales</taxon>
        <taxon>Enterobacteriaceae</taxon>
        <taxon>Salmonella</taxon>
    </lineage>
</organism>